<comment type="function">
    <text evidence="1 5 8 9 10 11 13 14 15 17">May play a role in RNA metabolism in both nuclei and mitochondria. In the nucleus binds to HNRPA1-associated poly(A) mRNAs and is part of nmRNP complexes at late stages of mRNA maturation which are possibly associated with nuclear mRNA export. Positively modulates nuclear export of mRNAs containing the EIF4E sensitivity element (4ESE) by binding simultaneously to both EIF4E and the 4ESE and acting as a platform for assembly for the RNA export complex (PubMed:19262567, PubMed:28325843). Also binds to exportin XPO1/CRM1 to engage the nuclear pore and traffic the bound mRNAs to the cytoplasm (PubMed:28325843). May bind mature mRNA in the nucleus outer membrane. In mitochondria binds to poly(A) mRNA. Plays a role in translation or stability of mitochondrially encoded cytochrome c oxidase (COX) subunits. May be involved in transcription regulation. Cooperates with PPARGC1A to regulate certain mitochondrially encoded genes and gluconeogenic genes and may regulate docking of PPARGC1A to transcription factors. Seems to be involved in the transcription regulation of the multidrug-related genes MDR1 and MVP. Part of a nuclear factor that binds to the invMED1 element of MDR1 and MVP gene promoters. Binds single-stranded DNA (By similarity). Required for maintaining mitochondrial potential (PubMed:23822101). Suppresses the initiation of basal levels of autophagy and mitophagy by sustaining BCL2 levels (PubMed:23822101).</text>
</comment>
<comment type="subunit">
    <text evidence="1 5 6 12 13 14 15 17 18">Component of mRNP complexes associated with HNRPA1 (PubMed:11585913). Component of the complex, at least composed of LRPPRC, BECN1 and BCL2; the interactions prevent BECN1 from forming an autophagy-inducing complex with PIK3C3 (PubMed:23822101). Interacts with CECR2, HEBP2, MAP1S and UXT. Interacts with PPARGC1A. Interacts with FOXO1 (By similarity). Interacts (via N-terminus) with EIF4E; the interaction promotes association of EIF4E with 4ESE-containing mRNAs (PubMed:19262567, PubMed:28325843). Interacts with exportin XPO1/CRM1; interacts both alone and in complex with EIF4E and 4ESE-containing mRNAs to form an EIF4E-dependent mRNA export complex (PubMed:28325843). Interacts with importin IPO8; the interaction occurs when LRPPRC is in its RNA-free form and returns LRPPRC to the nucleus for further export rounds (PubMed:28325843). Interacts with BECN1 (PubMed:31937766). Interacts with Aedes aegypti venom allergen-1; the interaction interrupts BECN1 and LRPPRC association (PubMed:31937766).</text>
</comment>
<comment type="interaction">
    <interactant intactId="EBI-1050853">
        <id>P42704</id>
    </interactant>
    <interactant intactId="EBI-77613">
        <id>P05067</id>
        <label>APP</label>
    </interactant>
    <organismsDiffer>false</organismsDiffer>
    <experiments>8</experiments>
</comment>
<comment type="interaction">
    <interactant intactId="EBI-1050853">
        <id>P42704</id>
    </interactant>
    <interactant intactId="EBI-73440">
        <id>P06730</id>
        <label>EIF4E</label>
    </interactant>
    <organismsDiffer>false</organismsDiffer>
    <experiments>6</experiments>
</comment>
<comment type="interaction">
    <interactant intactId="EBI-1050853">
        <id>P42704</id>
    </interactant>
    <interactant intactId="EBI-765486">
        <id>Q9UBK2</id>
        <label>PPARGC1A</label>
    </interactant>
    <organismsDiffer>false</organismsDiffer>
    <experiments>2</experiments>
</comment>
<comment type="interaction">
    <interactant intactId="EBI-1050853">
        <id>P42704</id>
    </interactant>
    <interactant intactId="EBI-1050793">
        <id>Q9GZT3</id>
        <label>SLIRP</label>
    </interactant>
    <organismsDiffer>false</organismsDiffer>
    <experiments>5</experiments>
</comment>
<comment type="interaction">
    <interactant intactId="EBI-1050853">
        <id>P42704</id>
    </interactant>
    <interactant intactId="EBI-347088">
        <id>P63104</id>
        <label>YWHAZ</label>
    </interactant>
    <organismsDiffer>false</organismsDiffer>
    <experiments>2</experiments>
</comment>
<comment type="subcellular location">
    <subcellularLocation>
        <location evidence="14 15">Mitochondrion</location>
    </subcellularLocation>
    <subcellularLocation>
        <location evidence="14">Nucleus</location>
    </subcellularLocation>
    <subcellularLocation>
        <location>Nucleus</location>
        <location>Nucleoplasm</location>
    </subcellularLocation>
    <subcellularLocation>
        <location>Nucleus inner membrane</location>
    </subcellularLocation>
    <subcellularLocation>
        <location>Nucleus outer membrane</location>
    </subcellularLocation>
    <text>Seems to be predominantly mitochondrial.</text>
</comment>
<comment type="tissue specificity">
    <text evidence="6 10">Expressed ubiquitously. Expression is highest in heart, skeletal muscle, kidney and liver, intermediate in brain, non-mucosal colon, spleen and placenta, and lowest in small intestine, thymus, lung and peripheral blood leukocytes.</text>
</comment>
<comment type="disease" evidence="7 16">
    <disease id="DI-01887">
        <name>Mitochondrial complex IV deficiency, nuclear type 5</name>
        <acronym>MC4DN5</acronym>
        <description>An autosomal recessive, severe mitochondrial disease with multisystemic manifestations and early onset. Clinical features include delayed psychomotor development, impaired intellectual development with speech delay, mild dysmorphic facial features, hypotonia, ataxia, and seizures. Brain imaging shows bilaterally symmetrical necrotic lesions in subcortical brain regions. Mortality is high, due to episodes of severe metabolic acidosis and coma.</description>
        <dbReference type="MIM" id="220111"/>
    </disease>
    <text>The disease is caused by variants affecting the gene represented in this entry.</text>
</comment>
<comment type="sequence caution" evidence="19">
    <conflict type="erroneous initiation">
        <sequence resource="EMBL-CDS" id="AAA67549"/>
    </conflict>
    <text>Truncated N-terminus.</text>
</comment>
<comment type="sequence caution" evidence="19">
    <conflict type="frameshift">
        <sequence resource="EMBL-CDS" id="AAA67549"/>
    </conflict>
</comment>
<keyword id="KW-0002">3D-structure</keyword>
<keyword id="KW-0007">Acetylation</keyword>
<keyword id="KW-0072">Autophagy</keyword>
<keyword id="KW-0903">Direct protein sequencing</keyword>
<keyword id="KW-0225">Disease variant</keyword>
<keyword id="KW-0238">DNA-binding</keyword>
<keyword id="KW-0431">Leigh syndrome</keyword>
<keyword id="KW-0472">Membrane</keyword>
<keyword id="KW-0496">Mitochondrion</keyword>
<keyword id="KW-0509">mRNA transport</keyword>
<keyword id="KW-0539">Nucleus</keyword>
<keyword id="KW-0597">Phosphoprotein</keyword>
<keyword id="KW-1274">Primary mitochondrial disease</keyword>
<keyword id="KW-1267">Proteomics identification</keyword>
<keyword id="KW-1185">Reference proteome</keyword>
<keyword id="KW-0677">Repeat</keyword>
<keyword id="KW-0694">RNA-binding</keyword>
<keyword id="KW-0804">Transcription</keyword>
<keyword id="KW-0805">Transcription regulation</keyword>
<keyword id="KW-0809">Transit peptide</keyword>
<keyword id="KW-0813">Transport</keyword>
<reference key="1">
    <citation type="journal article" date="2004" name="Biochem. J.">
        <title>The role of the LRPPRC (leucine-rich pentatricopeptide repeat cassette) gene in cytochrome oxidase assembly: mutation causes lowered levels of COX (cytochrome c oxidase) I and COX III mRNA.</title>
        <authorList>
            <person name="Xu F."/>
            <person name="Morin C."/>
            <person name="Mitchell G."/>
            <person name="Ackerley C."/>
            <person name="Robinson B.H."/>
        </authorList>
    </citation>
    <scope>NUCLEOTIDE SEQUENCE [MRNA]</scope>
    <scope>FUNCTION IN COX ASSEMBLY</scope>
    <scope>TISSUE SPECIFICITY</scope>
    <scope>SUBCELLULAR LOCATION</scope>
</reference>
<reference key="2">
    <citation type="journal article" date="2004" name="Nat. Genet.">
        <title>Complete sequencing and characterization of 21,243 full-length human cDNAs.</title>
        <authorList>
            <person name="Ota T."/>
            <person name="Suzuki Y."/>
            <person name="Nishikawa T."/>
            <person name="Otsuki T."/>
            <person name="Sugiyama T."/>
            <person name="Irie R."/>
            <person name="Wakamatsu A."/>
            <person name="Hayashi K."/>
            <person name="Sato H."/>
            <person name="Nagai K."/>
            <person name="Kimura K."/>
            <person name="Makita H."/>
            <person name="Sekine M."/>
            <person name="Obayashi M."/>
            <person name="Nishi T."/>
            <person name="Shibahara T."/>
            <person name="Tanaka T."/>
            <person name="Ishii S."/>
            <person name="Yamamoto J."/>
            <person name="Saito K."/>
            <person name="Kawai Y."/>
            <person name="Isono Y."/>
            <person name="Nakamura Y."/>
            <person name="Nagahari K."/>
            <person name="Murakami K."/>
            <person name="Yasuda T."/>
            <person name="Iwayanagi T."/>
            <person name="Wagatsuma M."/>
            <person name="Shiratori A."/>
            <person name="Sudo H."/>
            <person name="Hosoiri T."/>
            <person name="Kaku Y."/>
            <person name="Kodaira H."/>
            <person name="Kondo H."/>
            <person name="Sugawara M."/>
            <person name="Takahashi M."/>
            <person name="Kanda K."/>
            <person name="Yokoi T."/>
            <person name="Furuya T."/>
            <person name="Kikkawa E."/>
            <person name="Omura Y."/>
            <person name="Abe K."/>
            <person name="Kamihara K."/>
            <person name="Katsuta N."/>
            <person name="Sato K."/>
            <person name="Tanikawa M."/>
            <person name="Yamazaki M."/>
            <person name="Ninomiya K."/>
            <person name="Ishibashi T."/>
            <person name="Yamashita H."/>
            <person name="Murakawa K."/>
            <person name="Fujimori K."/>
            <person name="Tanai H."/>
            <person name="Kimata M."/>
            <person name="Watanabe M."/>
            <person name="Hiraoka S."/>
            <person name="Chiba Y."/>
            <person name="Ishida S."/>
            <person name="Ono Y."/>
            <person name="Takiguchi S."/>
            <person name="Watanabe S."/>
            <person name="Yosida M."/>
            <person name="Hotuta T."/>
            <person name="Kusano J."/>
            <person name="Kanehori K."/>
            <person name="Takahashi-Fujii A."/>
            <person name="Hara H."/>
            <person name="Tanase T.-O."/>
            <person name="Nomura Y."/>
            <person name="Togiya S."/>
            <person name="Komai F."/>
            <person name="Hara R."/>
            <person name="Takeuchi K."/>
            <person name="Arita M."/>
            <person name="Imose N."/>
            <person name="Musashino K."/>
            <person name="Yuuki H."/>
            <person name="Oshima A."/>
            <person name="Sasaki N."/>
            <person name="Aotsuka S."/>
            <person name="Yoshikawa Y."/>
            <person name="Matsunawa H."/>
            <person name="Ichihara T."/>
            <person name="Shiohata N."/>
            <person name="Sano S."/>
            <person name="Moriya S."/>
            <person name="Momiyama H."/>
            <person name="Satoh N."/>
            <person name="Takami S."/>
            <person name="Terashima Y."/>
            <person name="Suzuki O."/>
            <person name="Nakagawa S."/>
            <person name="Senoh A."/>
            <person name="Mizoguchi H."/>
            <person name="Goto Y."/>
            <person name="Shimizu F."/>
            <person name="Wakebe H."/>
            <person name="Hishigaki H."/>
            <person name="Watanabe T."/>
            <person name="Sugiyama A."/>
            <person name="Takemoto M."/>
            <person name="Kawakami B."/>
            <person name="Yamazaki M."/>
            <person name="Watanabe K."/>
            <person name="Kumagai A."/>
            <person name="Itakura S."/>
            <person name="Fukuzumi Y."/>
            <person name="Fujimori Y."/>
            <person name="Komiyama M."/>
            <person name="Tashiro H."/>
            <person name="Tanigami A."/>
            <person name="Fujiwara T."/>
            <person name="Ono T."/>
            <person name="Yamada K."/>
            <person name="Fujii Y."/>
            <person name="Ozaki K."/>
            <person name="Hirao M."/>
            <person name="Ohmori Y."/>
            <person name="Kawabata A."/>
            <person name="Hikiji T."/>
            <person name="Kobatake N."/>
            <person name="Inagaki H."/>
            <person name="Ikema Y."/>
            <person name="Okamoto S."/>
            <person name="Okitani R."/>
            <person name="Kawakami T."/>
            <person name="Noguchi S."/>
            <person name="Itoh T."/>
            <person name="Shigeta K."/>
            <person name="Senba T."/>
            <person name="Matsumura K."/>
            <person name="Nakajima Y."/>
            <person name="Mizuno T."/>
            <person name="Morinaga M."/>
            <person name="Sasaki M."/>
            <person name="Togashi T."/>
            <person name="Oyama M."/>
            <person name="Hata H."/>
            <person name="Watanabe M."/>
            <person name="Komatsu T."/>
            <person name="Mizushima-Sugano J."/>
            <person name="Satoh T."/>
            <person name="Shirai Y."/>
            <person name="Takahashi Y."/>
            <person name="Nakagawa K."/>
            <person name="Okumura K."/>
            <person name="Nagase T."/>
            <person name="Nomura N."/>
            <person name="Kikuchi H."/>
            <person name="Masuho Y."/>
            <person name="Yamashita R."/>
            <person name="Nakai K."/>
            <person name="Yada T."/>
            <person name="Nakamura Y."/>
            <person name="Ohara O."/>
            <person name="Isogai T."/>
            <person name="Sugano S."/>
        </authorList>
    </citation>
    <scope>NUCLEOTIDE SEQUENCE [LARGE SCALE MRNA]</scope>
    <source>
        <tissue>Hippocampus</tissue>
        <tissue>Testis</tissue>
    </source>
</reference>
<reference key="3">
    <citation type="journal article" date="2005" name="Nature">
        <title>Generation and annotation of the DNA sequences of human chromosomes 2 and 4.</title>
        <authorList>
            <person name="Hillier L.W."/>
            <person name="Graves T.A."/>
            <person name="Fulton R.S."/>
            <person name="Fulton L.A."/>
            <person name="Pepin K.H."/>
            <person name="Minx P."/>
            <person name="Wagner-McPherson C."/>
            <person name="Layman D."/>
            <person name="Wylie K."/>
            <person name="Sekhon M."/>
            <person name="Becker M.C."/>
            <person name="Fewell G.A."/>
            <person name="Delehaunty K.D."/>
            <person name="Miner T.L."/>
            <person name="Nash W.E."/>
            <person name="Kremitzki C."/>
            <person name="Oddy L."/>
            <person name="Du H."/>
            <person name="Sun H."/>
            <person name="Bradshaw-Cordum H."/>
            <person name="Ali J."/>
            <person name="Carter J."/>
            <person name="Cordes M."/>
            <person name="Harris A."/>
            <person name="Isak A."/>
            <person name="van Brunt A."/>
            <person name="Nguyen C."/>
            <person name="Du F."/>
            <person name="Courtney L."/>
            <person name="Kalicki J."/>
            <person name="Ozersky P."/>
            <person name="Abbott S."/>
            <person name="Armstrong J."/>
            <person name="Belter E.A."/>
            <person name="Caruso L."/>
            <person name="Cedroni M."/>
            <person name="Cotton M."/>
            <person name="Davidson T."/>
            <person name="Desai A."/>
            <person name="Elliott G."/>
            <person name="Erb T."/>
            <person name="Fronick C."/>
            <person name="Gaige T."/>
            <person name="Haakenson W."/>
            <person name="Haglund K."/>
            <person name="Holmes A."/>
            <person name="Harkins R."/>
            <person name="Kim K."/>
            <person name="Kruchowski S.S."/>
            <person name="Strong C.M."/>
            <person name="Grewal N."/>
            <person name="Goyea E."/>
            <person name="Hou S."/>
            <person name="Levy A."/>
            <person name="Martinka S."/>
            <person name="Mead K."/>
            <person name="McLellan M.D."/>
            <person name="Meyer R."/>
            <person name="Randall-Maher J."/>
            <person name="Tomlinson C."/>
            <person name="Dauphin-Kohlberg S."/>
            <person name="Kozlowicz-Reilly A."/>
            <person name="Shah N."/>
            <person name="Swearengen-Shahid S."/>
            <person name="Snider J."/>
            <person name="Strong J.T."/>
            <person name="Thompson J."/>
            <person name="Yoakum M."/>
            <person name="Leonard S."/>
            <person name="Pearman C."/>
            <person name="Trani L."/>
            <person name="Radionenko M."/>
            <person name="Waligorski J.E."/>
            <person name="Wang C."/>
            <person name="Rock S.M."/>
            <person name="Tin-Wollam A.-M."/>
            <person name="Maupin R."/>
            <person name="Latreille P."/>
            <person name="Wendl M.C."/>
            <person name="Yang S.-P."/>
            <person name="Pohl C."/>
            <person name="Wallis J.W."/>
            <person name="Spieth J."/>
            <person name="Bieri T.A."/>
            <person name="Berkowicz N."/>
            <person name="Nelson J.O."/>
            <person name="Osborne J."/>
            <person name="Ding L."/>
            <person name="Meyer R."/>
            <person name="Sabo A."/>
            <person name="Shotland Y."/>
            <person name="Sinha P."/>
            <person name="Wohldmann P.E."/>
            <person name="Cook L.L."/>
            <person name="Hickenbotham M.T."/>
            <person name="Eldred J."/>
            <person name="Williams D."/>
            <person name="Jones T.A."/>
            <person name="She X."/>
            <person name="Ciccarelli F.D."/>
            <person name="Izaurralde E."/>
            <person name="Taylor J."/>
            <person name="Schmutz J."/>
            <person name="Myers R.M."/>
            <person name="Cox D.R."/>
            <person name="Huang X."/>
            <person name="McPherson J.D."/>
            <person name="Mardis E.R."/>
            <person name="Clifton S.W."/>
            <person name="Warren W.C."/>
            <person name="Chinwalla A.T."/>
            <person name="Eddy S.R."/>
            <person name="Marra M.A."/>
            <person name="Ovcharenko I."/>
            <person name="Furey T.S."/>
            <person name="Miller W."/>
            <person name="Eichler E.E."/>
            <person name="Bork P."/>
            <person name="Suyama M."/>
            <person name="Torrents D."/>
            <person name="Waterston R.H."/>
            <person name="Wilson R.K."/>
        </authorList>
    </citation>
    <scope>NUCLEOTIDE SEQUENCE [LARGE SCALE GENOMIC DNA]</scope>
</reference>
<reference key="4">
    <citation type="journal article" date="2004" name="Genome Res.">
        <title>The status, quality, and expansion of the NIH full-length cDNA project: the Mammalian Gene Collection (MGC).</title>
        <authorList>
            <consortium name="The MGC Project Team"/>
        </authorList>
    </citation>
    <scope>NUCLEOTIDE SEQUENCE [LARGE SCALE MRNA]</scope>
    <source>
        <tissue>Brain</tissue>
        <tissue>Muscle</tissue>
        <tissue>Placenta</tissue>
        <tissue>Testis</tissue>
    </source>
</reference>
<reference key="5">
    <citation type="journal article" date="1994" name="In Vitro Cell. Dev. Biol. Anim.">
        <title>Molecular cloning and expression of the gene for a major leucine-rich protein from human hepatoblastoma cells (HepG2).</title>
        <authorList>
            <person name="Hou J."/>
            <person name="Wang F."/>
            <person name="McKeehan W.L."/>
        </authorList>
    </citation>
    <scope>NUCLEOTIDE SEQUENCE [MRNA] OF 108-1394</scope>
    <source>
        <tissue>Liver</tissue>
    </source>
</reference>
<reference key="6">
    <citation type="submission" date="2007-07" db="UniProtKB">
        <authorList>
            <person name="Bienvenut W.V."/>
            <person name="Heiserich L."/>
            <person name="Boulahbel H."/>
            <person name="Gottlieb E."/>
        </authorList>
    </citation>
    <scope>PROTEIN SEQUENCE OF 156-170; 260-280; 304-314; 454-463; 530-541; 656-672; 740-750; 764-772; 1050-1059; 1091-1098; 1177-1189 AND 1339-1347</scope>
    <scope>IDENTIFICATION BY MASS SPECTROMETRY</scope>
    <source>
        <tissue>B-cell lymphoma</tissue>
        <tissue>Colon carcinoma</tissue>
    </source>
</reference>
<reference key="7">
    <citation type="journal article" date="2001" name="Mol. Cell. Biol.">
        <title>Distinct RNP complexes of shuttling hnRNP proteins with pre-mRNA and mRNA: candidate intermediates in formation and export of mRNA.</title>
        <authorList>
            <person name="Mili S."/>
            <person name="Shu H.J."/>
            <person name="Zhao Y."/>
            <person name="Pinol-Roma S."/>
        </authorList>
    </citation>
    <scope>FUNCTION IN MRNA EXPORT</scope>
    <scope>IDENTIFICATION IN NMRNP COMPLEXES</scope>
    <scope>IDENTIFICATION BY MASS SPECTROMETRY</scope>
</reference>
<reference key="8">
    <citation type="journal article" date="2002" name="Genomics">
        <title>Sequence analysis of LRPPRC and its SEC1 domain interaction partners suggests roles in cytoskeletal organization, vesicular trafficking, nucleocytosolic shuttling, and chromosome activity.</title>
        <authorList>
            <person name="Liu L."/>
            <person name="McKeehan W.L."/>
        </authorList>
    </citation>
    <scope>TISSUE SPECIFICITY</scope>
    <scope>INTERACTION WITH CECR2; HEBP2; MAP1S AND UXT</scope>
</reference>
<reference key="9">
    <citation type="journal article" date="2003" name="Mol. Cell. Biol.">
        <title>LRP130, a pentatricopeptide motif protein with a noncanonical RNA-binding domain, is bound in vivo to mitochondrial and nuclear RNAs.</title>
        <authorList>
            <person name="Mili S."/>
            <person name="Pinol-Roma S."/>
        </authorList>
    </citation>
    <scope>RNA-BINDING</scope>
    <scope>FUNCTION IN MRNA EXPORT</scope>
    <scope>SUBCELLULAR LOCATION</scope>
</reference>
<reference key="10">
    <citation type="journal article" date="2004" name="Biochem. Biophys. Res. Commun.">
        <title>LRP130, a single-stranded DNA/RNA-binding protein, localizes at the outer nuclear and endoplasmic reticulum membrane, and interacts with mRNA in vivo.</title>
        <authorList>
            <person name="Tsuchiya N."/>
            <person name="Fukuda H."/>
            <person name="Nakashima K."/>
            <person name="Nagao M."/>
            <person name="Sugimura T."/>
            <person name="Nakagama H."/>
        </authorList>
    </citation>
    <scope>FUNCTION IN MRNA EXPORT</scope>
    <scope>SUBCELLULAR LOCATION</scope>
</reference>
<reference key="11">
    <citation type="journal article" date="2004" name="Nucleic Acids Res.">
        <title>New invMED1 element cis-activates human multidrug-related MDR1 and MVP genes, involving the LRP130 protein.</title>
        <authorList>
            <person name="Labialle S."/>
            <person name="Dayan G."/>
            <person name="Gayet L."/>
            <person name="Rigal D."/>
            <person name="Gambrelle J."/>
            <person name="Baggetto L.G."/>
        </authorList>
    </citation>
    <scope>FUNCTION IN TRANSCRIPTION REGULATION</scope>
    <scope>IDENTIFICATION BY MASS SPECTROMETRY</scope>
    <scope>SUBCELLULAR LOCATION</scope>
</reference>
<reference key="12">
    <citation type="journal article" date="2005" name="Biochem. Biophys. Res. Commun.">
        <title>Putative tumor suppressor RASSF1 interactive protein and cell death inducer C19ORF5 is a DNA binding protein.</title>
        <authorList>
            <person name="Liu L."/>
            <person name="Vo A."/>
            <person name="Liu G."/>
            <person name="McKeehan W.L."/>
        </authorList>
    </citation>
    <scope>INTERACTION WITH MAP1S</scope>
</reference>
<reference key="13">
    <citation type="journal article" date="2006" name="Genes Dev.">
        <title>Defects in energy homeostasis in Leigh syndrome French Canadian variant through PGC-1alpha/LRP130 complex.</title>
        <authorList>
            <person name="Cooper M.P."/>
            <person name="Qu L."/>
            <person name="Rohas L.M."/>
            <person name="Lin J."/>
            <person name="Yang W."/>
            <person name="Erdjument-Bromage H."/>
            <person name="Tempst P."/>
            <person name="Spiegelman B.M."/>
        </authorList>
    </citation>
    <scope>FUNCTION IN TRANSCRIPTION REGULATION</scope>
    <scope>INTERACTION WITH PPARGC1A</scope>
</reference>
<reference key="14">
    <citation type="journal article" date="2009" name="EMBO J.">
        <title>Molecular dissection of the eukaryotic initiation factor 4E (eIF4E) export-competent RNP.</title>
        <authorList>
            <person name="Topisirovic I."/>
            <person name="Siddiqui N."/>
            <person name="Lapointe V.L."/>
            <person name="Trost M."/>
            <person name="Thibault P."/>
            <person name="Bangeranye C."/>
            <person name="Pinol-Roma S."/>
            <person name="Borden K.L."/>
        </authorList>
    </citation>
    <scope>FUNCTION</scope>
    <scope>INTERACTION WITH EIF4E</scope>
    <scope>SUBCELLULAR LOCATION</scope>
    <scope>MUTAGENESIS OF TYR-441 AND TYR-583</scope>
</reference>
<reference key="15">
    <citation type="journal article" date="2009" name="Science">
        <title>Lysine acetylation targets protein complexes and co-regulates major cellular functions.</title>
        <authorList>
            <person name="Choudhary C."/>
            <person name="Kumar C."/>
            <person name="Gnad F."/>
            <person name="Nielsen M.L."/>
            <person name="Rehman M."/>
            <person name="Walther T.C."/>
            <person name="Olsen J.V."/>
            <person name="Mann M."/>
        </authorList>
    </citation>
    <scope>ACETYLATION [LARGE SCALE ANALYSIS] AT LYS-155; LYS-187; LYS-292; LYS-613; LYS-726 AND LYS-750</scope>
    <scope>IDENTIFICATION BY MASS SPECTROMETRY [LARGE SCALE ANALYSIS]</scope>
</reference>
<reference key="16">
    <citation type="journal article" date="2011" name="BMC Syst. Biol.">
        <title>Initial characterization of the human central proteome.</title>
        <authorList>
            <person name="Burkard T.R."/>
            <person name="Planyavsky M."/>
            <person name="Kaupe I."/>
            <person name="Breitwieser F.P."/>
            <person name="Buerckstuemmer T."/>
            <person name="Bennett K.L."/>
            <person name="Superti-Furga G."/>
            <person name="Colinge J."/>
        </authorList>
    </citation>
    <scope>IDENTIFICATION BY MASS SPECTROMETRY [LARGE SCALE ANALYSIS]</scope>
</reference>
<reference key="17">
    <citation type="journal article" date="2013" name="Biochem. J.">
        <title>Mitochondrion-associated protein LRPPRC suppresses the initiation of basal levels of autophagy via enhancing Bcl-2 stability.</title>
        <authorList>
            <person name="Zou J."/>
            <person name="Yue F."/>
            <person name="Jiang X."/>
            <person name="Li W."/>
            <person name="Yi J."/>
            <person name="Liu L."/>
        </authorList>
    </citation>
    <scope>FUNCTION</scope>
    <scope>IDENTIFICATION IN A COMPLEX WITH BECN1 AND BCL2</scope>
    <scope>SUBCELLULAR LOCATION</scope>
</reference>
<reference key="18">
    <citation type="journal article" date="2013" name="J. Proteome Res.">
        <title>Toward a comprehensive characterization of a human cancer cell phosphoproteome.</title>
        <authorList>
            <person name="Zhou H."/>
            <person name="Di Palma S."/>
            <person name="Preisinger C."/>
            <person name="Peng M."/>
            <person name="Polat A.N."/>
            <person name="Heck A.J."/>
            <person name="Mohammed S."/>
        </authorList>
    </citation>
    <scope>PHOSPHORYLATION [LARGE SCALE ANALYSIS] AT SER-1026; SER-1029; THR-1136 AND SER-1138</scope>
    <scope>IDENTIFICATION BY MASS SPECTROMETRY [LARGE SCALE ANALYSIS]</scope>
    <source>
        <tissue>Erythroleukemia</tissue>
    </source>
</reference>
<reference key="19">
    <citation type="journal article" date="2014" name="J. Proteomics">
        <title>An enzyme assisted RP-RPLC approach for in-depth analysis of human liver phosphoproteome.</title>
        <authorList>
            <person name="Bian Y."/>
            <person name="Song C."/>
            <person name="Cheng K."/>
            <person name="Dong M."/>
            <person name="Wang F."/>
            <person name="Huang J."/>
            <person name="Sun D."/>
            <person name="Wang L."/>
            <person name="Ye M."/>
            <person name="Zou H."/>
        </authorList>
    </citation>
    <scope>IDENTIFICATION BY MASS SPECTROMETRY [LARGE SCALE ANALYSIS]</scope>
    <source>
        <tissue>Liver</tissue>
    </source>
</reference>
<reference key="20">
    <citation type="journal article" date="2015" name="Proteomics">
        <title>N-terminome analysis of the human mitochondrial proteome.</title>
        <authorList>
            <person name="Vaca Jacome A.S."/>
            <person name="Rabilloud T."/>
            <person name="Schaeffer-Reiss C."/>
            <person name="Rompais M."/>
            <person name="Ayoub D."/>
            <person name="Lane L."/>
            <person name="Bairoch A."/>
            <person name="Van Dorsselaer A."/>
            <person name="Carapito C."/>
        </authorList>
    </citation>
    <scope>IDENTIFICATION BY MASS SPECTROMETRY [LARGE SCALE ANALYSIS]</scope>
</reference>
<reference key="21">
    <citation type="journal article" date="2017" name="RNA">
        <title>A biochemical framework for eIF4E-dependent mRNA export and nuclear recycling of the export machinery.</title>
        <authorList>
            <person name="Volpon L."/>
            <person name="Culjkovic-Kraljacic B."/>
            <person name="Sohn H.S."/>
            <person name="Blanchet-Cohen A."/>
            <person name="Osborne M.J."/>
            <person name="Borden K.L.B."/>
        </authorList>
    </citation>
    <scope>FUNCTION</scope>
    <scope>INTERACTION WITH EIF4E; IPO8 AND XPO1</scope>
</reference>
<reference evidence="19" key="22">
    <citation type="journal article" date="2020" name="Nat. Commun.">
        <title>A mosquito salivary protein promotes flavivirus transmission by activation of autophagy.</title>
        <authorList>
            <person name="Sun P."/>
            <person name="Nie K."/>
            <person name="Zhu Y."/>
            <person name="Liu Y."/>
            <person name="Wu P."/>
            <person name="Liu Z."/>
            <person name="Du S."/>
            <person name="Fan H."/>
            <person name="Chen C.H."/>
            <person name="Zhang R."/>
            <person name="Wang P."/>
            <person name="Cheng G."/>
        </authorList>
    </citation>
    <scope>INTERACTION WITH BECN1 AND MOSQUITO VENOM ALLERGEN-1</scope>
</reference>
<reference key="23">
    <citation type="journal article" date="2003" name="Proc. Natl. Acad. Sci. U.S.A.">
        <title>Identification of a gene causing human cytochrome c oxidase deficiency by integrative genomics.</title>
        <authorList>
            <person name="Mootha V.K."/>
            <person name="Lepage P."/>
            <person name="Miller K."/>
            <person name="Bunkenborg J."/>
            <person name="Reich M."/>
            <person name="Hjerrild M."/>
            <person name="Delmonte T."/>
            <person name="Villeneuve A."/>
            <person name="Sladek R."/>
            <person name="Xu F."/>
            <person name="Mitchell G.A."/>
            <person name="Morin C."/>
            <person name="Mann M."/>
            <person name="Hudson T.J."/>
            <person name="Robinson B."/>
            <person name="Rioux J.D."/>
            <person name="Lander E.S."/>
        </authorList>
    </citation>
    <scope>VARIANT MC4DN5 VAL-354</scope>
</reference>
<reference key="24">
    <citation type="journal article" date="2015" name="Brain">
        <title>LRPPRC mutations cause early-onset multisystem mitochondrial disease outside of the French-Canadian population.</title>
        <authorList>
            <person name="Olahova M."/>
            <person name="Hardy S.A."/>
            <person name="Hall J."/>
            <person name="Yarham J.W."/>
            <person name="Haack T.B."/>
            <person name="Wilson W.C."/>
            <person name="Alston C.L."/>
            <person name="He L."/>
            <person name="Aznauryan E."/>
            <person name="Brown R.M."/>
            <person name="Brown G.K."/>
            <person name="Morris A.A."/>
            <person name="Mundy H."/>
            <person name="Broomfield A."/>
            <person name="Barbosa I.A."/>
            <person name="Simpson M.A."/>
            <person name="Deshpande C."/>
            <person name="Moeslinger D."/>
            <person name="Koch J."/>
            <person name="Stettner G.M."/>
            <person name="Bonnen P.E."/>
            <person name="Prokisch H."/>
            <person name="Lightowlers R.N."/>
            <person name="McFarland R."/>
            <person name="Chrzanowska-Lightowlers Z.M."/>
            <person name="Taylor R.W."/>
        </authorList>
    </citation>
    <scope>VARIANTS MC4DN5 VAL-866 DEL AND LYS-909 DEL</scope>
</reference>
<feature type="transit peptide" description="Mitochondrion" evidence="4">
    <location>
        <begin position="1"/>
        <end position="59"/>
    </location>
</feature>
<feature type="chain" id="PRO_0000084467" description="Leucine-rich PPR motif-containing protein, mitochondrial">
    <location>
        <begin position="60"/>
        <end position="1394"/>
    </location>
</feature>
<feature type="repeat" description="PPR 1">
    <location>
        <begin position="126"/>
        <end position="160"/>
    </location>
</feature>
<feature type="repeat" description="PPR 2">
    <location>
        <begin position="161"/>
        <end position="195"/>
    </location>
</feature>
<feature type="repeat" description="PPR 3">
    <location>
        <begin position="196"/>
        <end position="230"/>
    </location>
</feature>
<feature type="repeat" description="PPR 4">
    <location>
        <begin position="231"/>
        <end position="265"/>
    </location>
</feature>
<feature type="repeat" description="PPR 5">
    <location>
        <begin position="266"/>
        <end position="300"/>
    </location>
</feature>
<feature type="repeat" description="PPR 6">
    <location>
        <begin position="301"/>
        <end position="335"/>
    </location>
</feature>
<feature type="repeat" description="PPR 7">
    <location>
        <begin position="403"/>
        <end position="437"/>
    </location>
</feature>
<feature type="repeat" description="PPR 8">
    <location>
        <begin position="438"/>
        <end position="472"/>
    </location>
</feature>
<feature type="repeat" description="PPR 9">
    <location>
        <begin position="678"/>
        <end position="709"/>
    </location>
</feature>
<feature type="repeat" description="PPR 10">
    <location>
        <begin position="710"/>
        <end position="746"/>
    </location>
</feature>
<feature type="repeat" description="PPR 11">
    <location>
        <begin position="747"/>
        <end position="784"/>
    </location>
</feature>
<feature type="repeat" description="PPR 12">
    <location>
        <begin position="785"/>
        <end position="820"/>
    </location>
</feature>
<feature type="repeat" description="PPR 13">
    <location>
        <begin position="821"/>
        <end position="856"/>
    </location>
</feature>
<feature type="repeat" description="PPR 14">
    <location>
        <begin position="954"/>
        <end position="988"/>
    </location>
</feature>
<feature type="repeat" description="PPR 15">
    <location>
        <begin position="1031"/>
        <end position="1065"/>
    </location>
</feature>
<feature type="repeat" description="PPR 16">
    <location>
        <begin position="1066"/>
        <end position="1102"/>
    </location>
</feature>
<feature type="repeat" description="PPR 17">
    <location>
        <begin position="1103"/>
        <end position="1137"/>
    </location>
</feature>
<feature type="repeat" description="PPR 18">
    <location>
        <begin position="1138"/>
        <end position="1175"/>
    </location>
</feature>
<feature type="repeat" description="PPR 19">
    <location>
        <begin position="1176"/>
        <end position="1210"/>
    </location>
</feature>
<feature type="repeat" description="PPR 20">
    <location>
        <begin position="1317"/>
        <end position="1351"/>
    </location>
</feature>
<feature type="region of interest" description="Interaction with BECN1 and Aedes aegypti venom allergen-1" evidence="18">
    <location>
        <begin position="712"/>
        <end position="1067"/>
    </location>
</feature>
<feature type="region of interest" description="RNA-binding">
    <location>
        <begin position="1121"/>
        <end position="1394"/>
    </location>
</feature>
<feature type="modified residue" description="N6-acetyllysine" evidence="20">
    <location>
        <position position="155"/>
    </location>
</feature>
<feature type="modified residue" description="N6-acetyllysine" evidence="20">
    <location>
        <position position="187"/>
    </location>
</feature>
<feature type="modified residue" description="N6-acetyllysine" evidence="3">
    <location>
        <position position="226"/>
    </location>
</feature>
<feature type="modified residue" description="N6-acetyllysine" evidence="20">
    <location>
        <position position="292"/>
    </location>
</feature>
<feature type="modified residue" description="N6-acetyllysine" evidence="3">
    <location>
        <position position="463"/>
    </location>
</feature>
<feature type="modified residue" description="N6-acetyllysine" evidence="20">
    <location>
        <position position="613"/>
    </location>
</feature>
<feature type="modified residue" description="N6-acetyllysine" evidence="20">
    <location>
        <position position="726"/>
    </location>
</feature>
<feature type="modified residue" description="N6-acetyllysine" evidence="20">
    <location>
        <position position="750"/>
    </location>
</feature>
<feature type="modified residue" description="Phosphoserine" evidence="21">
    <location>
        <position position="1026"/>
    </location>
</feature>
<feature type="modified residue" description="Phosphoserine" evidence="2">
    <location>
        <position position="1027"/>
    </location>
</feature>
<feature type="modified residue" description="Phosphoserine" evidence="21">
    <location>
        <position position="1029"/>
    </location>
</feature>
<feature type="modified residue" description="Phosphothreonine" evidence="21">
    <location>
        <position position="1136"/>
    </location>
</feature>
<feature type="modified residue" description="Phosphoserine" evidence="21">
    <location>
        <position position="1138"/>
    </location>
</feature>
<feature type="sequence variant" id="VAR_018656" description="In MC4DN5; dbSNP:rs119466000." evidence="7">
    <original>A</original>
    <variation>V</variation>
    <location>
        <position position="354"/>
    </location>
</feature>
<feature type="sequence variant" id="VAR_052935" description="In dbSNP:rs35035668.">
    <original>T</original>
    <variation>A</variation>
    <location>
        <position position="478"/>
    </location>
</feature>
<feature type="sequence variant" id="VAR_075428" description="In MC4DN5; uncertain significance." evidence="16">
    <location>
        <position position="866"/>
    </location>
</feature>
<feature type="sequence variant" id="VAR_075429" description="In MC4DN5; uncertain significance." evidence="16">
    <location>
        <position position="909"/>
    </location>
</feature>
<feature type="mutagenesis site" description="Reduces binding to EIF4E." evidence="14">
    <original>Y</original>
    <variation>A</variation>
    <location>
        <position position="441"/>
    </location>
</feature>
<feature type="mutagenesis site" description="Reduces binding to EIF4E." evidence="14">
    <original>Y</original>
    <variation>A</variation>
    <location>
        <position position="583"/>
    </location>
</feature>
<feature type="sequence conflict" description="In Ref. 2; BAF82705." evidence="19" ref="2">
    <original>S</original>
    <variation>G</variation>
    <location>
        <position position="54"/>
    </location>
</feature>
<feature type="sequence conflict" description="In Ref. 5; AAA67549." evidence="19" ref="5">
    <original>S</original>
    <variation>F</variation>
    <location>
        <position position="296"/>
    </location>
</feature>
<feature type="sequence conflict" description="In Ref. 4; AAH26034." evidence="19" ref="4">
    <original>LKSN</original>
    <variation>YFPI</variation>
    <location>
        <begin position="528"/>
        <end position="531"/>
    </location>
</feature>
<feature type="sequence conflict" description="In Ref. 5; AAA67549." evidence="19" ref="5">
    <original>L</original>
    <variation>V</variation>
    <location>
        <position position="556"/>
    </location>
</feature>
<feature type="sequence conflict" description="In Ref. 5; AAA67549." evidence="19" ref="5">
    <original>Y</original>
    <variation>N</variation>
    <location>
        <position position="583"/>
    </location>
</feature>
<feature type="sequence conflict" description="In Ref. 5; AAA67549." evidence="19" ref="5">
    <original>S</original>
    <variation>R</variation>
    <location>
        <position position="648"/>
    </location>
</feature>
<feature type="sequence conflict" description="In Ref. 2; BAC86287." evidence="19" ref="2">
    <original>Q</original>
    <variation>R</variation>
    <location>
        <position position="676"/>
    </location>
</feature>
<feature type="sequence conflict" description="In Ref. 2; BAC86287." evidence="19" ref="2">
    <original>K</original>
    <variation>R</variation>
    <location>
        <position position="702"/>
    </location>
</feature>
<feature type="sequence conflict" description="In Ref. 5; AAA67549." evidence="19" ref="5">
    <original>KYV</original>
    <variation>NYL</variation>
    <location>
        <begin position="750"/>
        <end position="752"/>
    </location>
</feature>
<feature type="sequence conflict" description="In Ref. 5; AAA67549." evidence="19" ref="5">
    <original>N</original>
    <variation>K</variation>
    <location>
        <position position="769"/>
    </location>
</feature>
<feature type="sequence conflict" description="In Ref. 2; BAC86287." evidence="19" ref="2">
    <original>N</original>
    <variation>D</variation>
    <location>
        <position position="1192"/>
    </location>
</feature>
<name>LPPRC_HUMAN</name>
<sequence>MAALLRSARWLLRAGAAPRLPLSLRLLPGGPGRLHAASYLPAARAGPVAGGLLSPARLYAIAAKEKDIQEESTFSSRKISNQFDWALMRLDLSVRRTGRIPKKLLQKVFNDTCRSGGLGGSHALLLLRSCGSLLPELKLEERTEFAHRIWDTLQKLGAVYDVSHYNALLKVYLQNEYKFSPTDFLAKMEEANIQPNRVTYQRLIASYCNVGDIEGASKILGFMKTKDLPVTEAVFSALVTGHARAGDMENAENILTVMRDAGIEPGPDTYLALLNAYAEKGDIDHVKQTLEKVEKSELHLMDRDLLQIIFSFSKAGYPQYVSEILEKVTCERRYIPDAMNLILLLVTEKLEDVALQILLACPVSKEDGPSVFGSFFLQHCVTMNTPVEKLTDYCKKLKEVQMHSFPLQFTLHCALLANKTDLAKALMKAVKEEGFPIRPHYFWPLLVGRRKEKNVQGIIEILKGMQELGVHPDQETYTDYVIPCFDSVNSARAILQENGCLSDSDMFSQAGLRSEAANGNLDFVLSFLKSNTLPISLQSIRSSLLLGFRRSMNINLWSEITELLYKDGRYCQEPRGPTEAVGYFLYNLIDSMSDSEVQAKEEHLRQYFHQLEKMNVKIPENIYRGIRNLLESYHVPELIKDAHLLVESKNLDFQKTVQLTSSELESTLETLKAENQPIRDVLKQLILVLCSEENMQKALELKAKYESDMVTGGYAALINLCCRHDKVEDALNLKEEFDRLDSSAVLDTGKYVGLVRVLAKHGKLQDAINILKEMKEKDVLIKDTTALSFFHMLNGAALRGEIETVKQLHEAIVTLGLAEPSTNISFPLVTVHLEKGDLSTALEVAIDCYEKYKVLPRIHDVLCKLVEKGETDLIQKAMDFVSQEQGEMVMLYDLFFAFLQTGNYKEAKKIIETPGIRARSARLQWFCDRCVANNQVETLEKLVELTQKLFECDRDQMYYNLLKLYKINGDWQRADAVWNKIQEENVIPREKTLRLLAEILREGNQEVPFDVPELWYEDEKHSLNSSSASTTEPDFQKDILIACRLNQKKGAYDIFLNAKEQNIVFNAETYSNLIKLLMSEDYFTQAMEVKAFAETHIKGFTLNDAANSRLIITQVRRDYLKEAVTTLKTVLDQQQTPSRLAVTRVIQALAMKGDVENIEVVQKMLNGLEDSIGLSKMVFINNIALAQIKNNNIDAAIENIENMLTSENKVIEPQYFGLAYLFRKVIEEQLEPAVEKISIMAERLANQFAIYKPVTDFFLQLVDAGKVDDARALLQRCGAIAEQTPILLLFLLRNSRKQGKASTVKSVLELIPELNEKEEAYNSLMKSYVSEKDVTSAKALYEHLTAKNTKLDDLFLKRYASLLKYAGEPVPFIEPPESFEFYAQQLRKLRENSS</sequence>
<dbReference type="EMBL" id="AY289212">
    <property type="protein sequence ID" value="AAP41922.1"/>
    <property type="molecule type" value="mRNA"/>
</dbReference>
<dbReference type="EMBL" id="AK125781">
    <property type="protein sequence ID" value="BAC86287.1"/>
    <property type="molecule type" value="mRNA"/>
</dbReference>
<dbReference type="EMBL" id="AK290016">
    <property type="protein sequence ID" value="BAF82705.1"/>
    <property type="molecule type" value="mRNA"/>
</dbReference>
<dbReference type="EMBL" id="AC108476">
    <property type="protein sequence ID" value="AAY24012.1"/>
    <property type="molecule type" value="Genomic_DNA"/>
</dbReference>
<dbReference type="EMBL" id="AC127379">
    <property type="protein sequence ID" value="AAY24043.1"/>
    <property type="molecule type" value="Genomic_DNA"/>
</dbReference>
<dbReference type="EMBL" id="BC010282">
    <property type="protein sequence ID" value="AAH10282.1"/>
    <property type="molecule type" value="mRNA"/>
</dbReference>
<dbReference type="EMBL" id="BC026034">
    <property type="protein sequence ID" value="AAH26034.1"/>
    <property type="molecule type" value="mRNA"/>
</dbReference>
<dbReference type="EMBL" id="BC050311">
    <property type="protein sequence ID" value="AAH50311.1"/>
    <property type="molecule type" value="mRNA"/>
</dbReference>
<dbReference type="EMBL" id="BC130285">
    <property type="protein sequence ID" value="AAI30286.1"/>
    <property type="molecule type" value="mRNA"/>
</dbReference>
<dbReference type="EMBL" id="M92439">
    <property type="protein sequence ID" value="AAA67549.1"/>
    <property type="status" value="ALT_SEQ"/>
    <property type="molecule type" value="mRNA"/>
</dbReference>
<dbReference type="CCDS" id="CCDS33189.1"/>
<dbReference type="PIR" id="S27954">
    <property type="entry name" value="S27954"/>
</dbReference>
<dbReference type="RefSeq" id="NP_573566.2">
    <property type="nucleotide sequence ID" value="NM_133259.3"/>
</dbReference>
<dbReference type="PDB" id="8ANY">
    <property type="method" value="EM"/>
    <property type="resolution" value="2.85 A"/>
    <property type="chains" value="A5=1-1394"/>
</dbReference>
<dbReference type="PDBsum" id="8ANY"/>
<dbReference type="EMDB" id="EMD-15544"/>
<dbReference type="SMR" id="P42704"/>
<dbReference type="BioGRID" id="115432">
    <property type="interactions" value="850"/>
</dbReference>
<dbReference type="CORUM" id="P42704"/>
<dbReference type="DIP" id="DIP-27543N"/>
<dbReference type="FunCoup" id="P42704">
    <property type="interactions" value="2604"/>
</dbReference>
<dbReference type="IntAct" id="P42704">
    <property type="interactions" value="152"/>
</dbReference>
<dbReference type="MINT" id="P42704"/>
<dbReference type="STRING" id="9606.ENSP00000260665"/>
<dbReference type="ChEMBL" id="CHEMBL4295762"/>
<dbReference type="CarbonylDB" id="P42704"/>
<dbReference type="GlyGen" id="P42704">
    <property type="glycosylation" value="4 sites, 1 N-linked glycan (1 site), 1 O-linked glycan (2 sites)"/>
</dbReference>
<dbReference type="iPTMnet" id="P42704"/>
<dbReference type="MetOSite" id="P42704"/>
<dbReference type="PhosphoSitePlus" id="P42704"/>
<dbReference type="SwissPalm" id="P42704"/>
<dbReference type="BioMuta" id="LRPPRC"/>
<dbReference type="DMDM" id="156632706"/>
<dbReference type="jPOST" id="P42704"/>
<dbReference type="MassIVE" id="P42704"/>
<dbReference type="PaxDb" id="9606-ENSP00000260665"/>
<dbReference type="PeptideAtlas" id="P42704"/>
<dbReference type="ProteomicsDB" id="55547"/>
<dbReference type="Pumba" id="P42704"/>
<dbReference type="Antibodypedia" id="47400">
    <property type="antibodies" value="166 antibodies from 29 providers"/>
</dbReference>
<dbReference type="DNASU" id="10128"/>
<dbReference type="Ensembl" id="ENST00000260665.12">
    <property type="protein sequence ID" value="ENSP00000260665.7"/>
    <property type="gene ID" value="ENSG00000138095.20"/>
</dbReference>
<dbReference type="GeneID" id="10128"/>
<dbReference type="KEGG" id="hsa:10128"/>
<dbReference type="MANE-Select" id="ENST00000260665.12">
    <property type="protein sequence ID" value="ENSP00000260665.7"/>
    <property type="RefSeq nucleotide sequence ID" value="NM_133259.4"/>
    <property type="RefSeq protein sequence ID" value="NP_573566.2"/>
</dbReference>
<dbReference type="UCSC" id="uc002rtr.3">
    <property type="organism name" value="human"/>
</dbReference>
<dbReference type="AGR" id="HGNC:15714"/>
<dbReference type="CTD" id="10128"/>
<dbReference type="DisGeNET" id="10128"/>
<dbReference type="GeneCards" id="LRPPRC"/>
<dbReference type="HGNC" id="HGNC:15714">
    <property type="gene designation" value="LRPPRC"/>
</dbReference>
<dbReference type="HPA" id="ENSG00000138095">
    <property type="expression patterns" value="Low tissue specificity"/>
</dbReference>
<dbReference type="MalaCards" id="LRPPRC"/>
<dbReference type="MIM" id="220111">
    <property type="type" value="phenotype"/>
</dbReference>
<dbReference type="MIM" id="607544">
    <property type="type" value="gene"/>
</dbReference>
<dbReference type="neXtProt" id="NX_P42704"/>
<dbReference type="OpenTargets" id="ENSG00000138095"/>
<dbReference type="Orphanet" id="70472">
    <property type="disease" value="Congenital lactic acidosis, Saguenay-Lac-Saint-Jean type"/>
</dbReference>
<dbReference type="PharmGKB" id="PA30459"/>
<dbReference type="VEuPathDB" id="HostDB:ENSG00000138095"/>
<dbReference type="eggNOG" id="KOG4318">
    <property type="taxonomic scope" value="Eukaryota"/>
</dbReference>
<dbReference type="GeneTree" id="ENSGT00960000186682"/>
<dbReference type="HOGENOM" id="CLU_006166_0_0_1"/>
<dbReference type="InParanoid" id="P42704"/>
<dbReference type="OMA" id="HIDRNKI"/>
<dbReference type="OrthoDB" id="185373at2759"/>
<dbReference type="PAN-GO" id="P42704">
    <property type="GO annotations" value="4 GO annotations based on evolutionary models"/>
</dbReference>
<dbReference type="PhylomeDB" id="P42704"/>
<dbReference type="TreeFam" id="TF323626"/>
<dbReference type="PathwayCommons" id="P42704"/>
<dbReference type="Reactome" id="R-HSA-9836573">
    <property type="pathway name" value="Mitochondrial RNA degradation"/>
</dbReference>
<dbReference type="SignaLink" id="P42704"/>
<dbReference type="BioGRID-ORCS" id="10128">
    <property type="hits" value="434 hits in 1169 CRISPR screens"/>
</dbReference>
<dbReference type="CD-CODE" id="FB4E32DD">
    <property type="entry name" value="Presynaptic clusters and postsynaptic densities"/>
</dbReference>
<dbReference type="ChiTaRS" id="LRPPRC">
    <property type="organism name" value="human"/>
</dbReference>
<dbReference type="GeneWiki" id="LRPPRC"/>
<dbReference type="GenomeRNAi" id="10128"/>
<dbReference type="Pharos" id="P42704">
    <property type="development level" value="Tbio"/>
</dbReference>
<dbReference type="PRO" id="PR:P42704"/>
<dbReference type="Proteomes" id="UP000005640">
    <property type="component" value="Chromosome 2"/>
</dbReference>
<dbReference type="RNAct" id="P42704">
    <property type="molecule type" value="protein"/>
</dbReference>
<dbReference type="Bgee" id="ENSG00000138095">
    <property type="expression patterns" value="Expressed in skeletal muscle tissue of rectus abdominis and 220 other cell types or tissues"/>
</dbReference>
<dbReference type="ExpressionAtlas" id="P42704">
    <property type="expression patterns" value="baseline and differential"/>
</dbReference>
<dbReference type="GO" id="GO:0000794">
    <property type="term" value="C:condensed nuclear chromosome"/>
    <property type="evidence" value="ECO:0000314"/>
    <property type="project" value="HGNC-UCL"/>
</dbReference>
<dbReference type="GO" id="GO:0005856">
    <property type="term" value="C:cytoskeleton"/>
    <property type="evidence" value="ECO:0000314"/>
    <property type="project" value="HGNC-UCL"/>
</dbReference>
<dbReference type="GO" id="GO:0016020">
    <property type="term" value="C:membrane"/>
    <property type="evidence" value="ECO:0007005"/>
    <property type="project" value="UniProtKB"/>
</dbReference>
<dbReference type="GO" id="GO:0005874">
    <property type="term" value="C:microtubule"/>
    <property type="evidence" value="ECO:0000314"/>
    <property type="project" value="UniProtKB"/>
</dbReference>
<dbReference type="GO" id="GO:0005759">
    <property type="term" value="C:mitochondrial matrix"/>
    <property type="evidence" value="ECO:0000314"/>
    <property type="project" value="FlyBase"/>
</dbReference>
<dbReference type="GO" id="GO:0042645">
    <property type="term" value="C:mitochondrial nucleoid"/>
    <property type="evidence" value="ECO:0000314"/>
    <property type="project" value="BHF-UCL"/>
</dbReference>
<dbReference type="GO" id="GO:0005739">
    <property type="term" value="C:mitochondrion"/>
    <property type="evidence" value="ECO:0000314"/>
    <property type="project" value="UniProtKB"/>
</dbReference>
<dbReference type="GO" id="GO:0005637">
    <property type="term" value="C:nuclear inner membrane"/>
    <property type="evidence" value="ECO:0007669"/>
    <property type="project" value="UniProtKB-SubCell"/>
</dbReference>
<dbReference type="GO" id="GO:0005640">
    <property type="term" value="C:nuclear outer membrane"/>
    <property type="evidence" value="ECO:0007669"/>
    <property type="project" value="UniProtKB-SubCell"/>
</dbReference>
<dbReference type="GO" id="GO:0005654">
    <property type="term" value="C:nucleoplasm"/>
    <property type="evidence" value="ECO:0007669"/>
    <property type="project" value="UniProtKB-SubCell"/>
</dbReference>
<dbReference type="GO" id="GO:0005634">
    <property type="term" value="C:nucleus"/>
    <property type="evidence" value="ECO:0000314"/>
    <property type="project" value="UniProtKB"/>
</dbReference>
<dbReference type="GO" id="GO:0048471">
    <property type="term" value="C:perinuclear region of cytoplasm"/>
    <property type="evidence" value="ECO:0000314"/>
    <property type="project" value="HGNC-UCL"/>
</dbReference>
<dbReference type="GO" id="GO:1990904">
    <property type="term" value="C:ribonucleoprotein complex"/>
    <property type="evidence" value="ECO:0007669"/>
    <property type="project" value="Ensembl"/>
</dbReference>
<dbReference type="GO" id="GO:0048487">
    <property type="term" value="F:beta-tubulin binding"/>
    <property type="evidence" value="ECO:0000314"/>
    <property type="project" value="HGNC-UCL"/>
</dbReference>
<dbReference type="GO" id="GO:0008017">
    <property type="term" value="F:microtubule binding"/>
    <property type="evidence" value="ECO:0000304"/>
    <property type="project" value="HGNC-UCL"/>
</dbReference>
<dbReference type="GO" id="GO:0003730">
    <property type="term" value="F:mRNA 3'-UTR binding"/>
    <property type="evidence" value="ECO:0000318"/>
    <property type="project" value="GO_Central"/>
</dbReference>
<dbReference type="GO" id="GO:0003723">
    <property type="term" value="F:RNA binding"/>
    <property type="evidence" value="ECO:0007005"/>
    <property type="project" value="UniProtKB"/>
</dbReference>
<dbReference type="GO" id="GO:0003697">
    <property type="term" value="F:single-stranded DNA binding"/>
    <property type="evidence" value="ECO:0007669"/>
    <property type="project" value="Ensembl"/>
</dbReference>
<dbReference type="GO" id="GO:0031625">
    <property type="term" value="F:ubiquitin protein ligase binding"/>
    <property type="evidence" value="ECO:0000353"/>
    <property type="project" value="ParkinsonsUK-UCL"/>
</dbReference>
<dbReference type="GO" id="GO:0006914">
    <property type="term" value="P:autophagy"/>
    <property type="evidence" value="ECO:0007669"/>
    <property type="project" value="UniProtKB-KW"/>
</dbReference>
<dbReference type="GO" id="GO:0000957">
    <property type="term" value="P:mitochondrial RNA catabolic process"/>
    <property type="evidence" value="ECO:0007669"/>
    <property type="project" value="Ensembl"/>
</dbReference>
<dbReference type="GO" id="GO:0047497">
    <property type="term" value="P:mitochondrion transport along microtubule"/>
    <property type="evidence" value="ECO:0000304"/>
    <property type="project" value="HGNC-UCL"/>
</dbReference>
<dbReference type="GO" id="GO:0051028">
    <property type="term" value="P:mRNA transport"/>
    <property type="evidence" value="ECO:0007669"/>
    <property type="project" value="UniProtKB-KW"/>
</dbReference>
<dbReference type="GO" id="GO:0000961">
    <property type="term" value="P:negative regulation of mitochondrial RNA catabolic process"/>
    <property type="evidence" value="ECO:0007669"/>
    <property type="project" value="Ensembl"/>
</dbReference>
<dbReference type="GO" id="GO:0070129">
    <property type="term" value="P:regulation of mitochondrial translation"/>
    <property type="evidence" value="ECO:0000318"/>
    <property type="project" value="GO_Central"/>
</dbReference>
<dbReference type="FunFam" id="1.25.40.10:FF:000428">
    <property type="entry name" value="Leucine-rich PPR motif-containing protein, mitochondrial"/>
    <property type="match status" value="1"/>
</dbReference>
<dbReference type="Gene3D" id="1.25.40.10">
    <property type="entry name" value="Tetratricopeptide repeat domain"/>
    <property type="match status" value="4"/>
</dbReference>
<dbReference type="InterPro" id="IPR033490">
    <property type="entry name" value="LRP130"/>
</dbReference>
<dbReference type="InterPro" id="IPR002885">
    <property type="entry name" value="Pentatricopeptide_rpt"/>
</dbReference>
<dbReference type="InterPro" id="IPR033443">
    <property type="entry name" value="PROP1-like_PPR_dom"/>
</dbReference>
<dbReference type="InterPro" id="IPR011990">
    <property type="entry name" value="TPR-like_helical_dom_sf"/>
</dbReference>
<dbReference type="NCBIfam" id="TIGR00756">
    <property type="entry name" value="PPR"/>
    <property type="match status" value="1"/>
</dbReference>
<dbReference type="PANTHER" id="PTHR46669">
    <property type="entry name" value="LEUCINE-RICH PPR MOTIF-CONTAINING PROTEIN, MITOCHONDRIAL"/>
    <property type="match status" value="1"/>
</dbReference>
<dbReference type="PANTHER" id="PTHR46669:SF1">
    <property type="entry name" value="LEUCINE-RICH PPR MOTIF-CONTAINING PROTEIN, MITOCHONDRIAL"/>
    <property type="match status" value="1"/>
</dbReference>
<dbReference type="Pfam" id="PF01535">
    <property type="entry name" value="PPR"/>
    <property type="match status" value="3"/>
</dbReference>
<dbReference type="Pfam" id="PF13812">
    <property type="entry name" value="PPR_3"/>
    <property type="match status" value="1"/>
</dbReference>
<dbReference type="Pfam" id="PF17177">
    <property type="entry name" value="PPR_long"/>
    <property type="match status" value="1"/>
</dbReference>
<dbReference type="PROSITE" id="PS51375">
    <property type="entry name" value="PPR"/>
    <property type="match status" value="11"/>
</dbReference>
<organism>
    <name type="scientific">Homo sapiens</name>
    <name type="common">Human</name>
    <dbReference type="NCBI Taxonomy" id="9606"/>
    <lineage>
        <taxon>Eukaryota</taxon>
        <taxon>Metazoa</taxon>
        <taxon>Chordata</taxon>
        <taxon>Craniata</taxon>
        <taxon>Vertebrata</taxon>
        <taxon>Euteleostomi</taxon>
        <taxon>Mammalia</taxon>
        <taxon>Eutheria</taxon>
        <taxon>Euarchontoglires</taxon>
        <taxon>Primates</taxon>
        <taxon>Haplorrhini</taxon>
        <taxon>Catarrhini</taxon>
        <taxon>Hominidae</taxon>
        <taxon>Homo</taxon>
    </lineage>
</organism>
<proteinExistence type="evidence at protein level"/>
<evidence type="ECO:0000250" key="1"/>
<evidence type="ECO:0000250" key="2">
    <source>
        <dbReference type="UniProtKB" id="Q5SGE0"/>
    </source>
</evidence>
<evidence type="ECO:0000250" key="3">
    <source>
        <dbReference type="UniProtKB" id="Q6PB66"/>
    </source>
</evidence>
<evidence type="ECO:0000255" key="4"/>
<evidence type="ECO:0000269" key="5">
    <source>
    </source>
</evidence>
<evidence type="ECO:0000269" key="6">
    <source>
    </source>
</evidence>
<evidence type="ECO:0000269" key="7">
    <source>
    </source>
</evidence>
<evidence type="ECO:0000269" key="8">
    <source>
    </source>
</evidence>
<evidence type="ECO:0000269" key="9">
    <source>
    </source>
</evidence>
<evidence type="ECO:0000269" key="10">
    <source>
    </source>
</evidence>
<evidence type="ECO:0000269" key="11">
    <source>
    </source>
</evidence>
<evidence type="ECO:0000269" key="12">
    <source>
    </source>
</evidence>
<evidence type="ECO:0000269" key="13">
    <source>
    </source>
</evidence>
<evidence type="ECO:0000269" key="14">
    <source>
    </source>
</evidence>
<evidence type="ECO:0000269" key="15">
    <source>
    </source>
</evidence>
<evidence type="ECO:0000269" key="16">
    <source>
    </source>
</evidence>
<evidence type="ECO:0000269" key="17">
    <source>
    </source>
</evidence>
<evidence type="ECO:0000269" key="18">
    <source>
    </source>
</evidence>
<evidence type="ECO:0000305" key="19"/>
<evidence type="ECO:0007744" key="20">
    <source>
    </source>
</evidence>
<evidence type="ECO:0007744" key="21">
    <source>
    </source>
</evidence>
<protein>
    <recommendedName>
        <fullName>Leucine-rich PPR motif-containing protein, mitochondrial</fullName>
    </recommendedName>
    <alternativeName>
        <fullName>130 kDa leucine-rich protein</fullName>
        <shortName>LRP 130</shortName>
    </alternativeName>
    <alternativeName>
        <fullName>GP130</fullName>
    </alternativeName>
</protein>
<gene>
    <name type="primary">LRPPRC</name>
    <name type="synonym">LRP130</name>
</gene>
<accession>P42704</accession>
<accession>A0PJE3</accession>
<accession>A8K1V1</accession>
<accession>Q53PC0</accession>
<accession>Q53QN7</accession>
<accession>Q6ZUD8</accession>
<accession>Q7Z7A6</accession>
<accession>Q96D84</accession>